<feature type="chain" id="PRO_1000001525" description="Recombination protein RecR">
    <location>
        <begin position="1"/>
        <end position="203"/>
    </location>
</feature>
<feature type="domain" description="Toprim" evidence="1">
    <location>
        <begin position="80"/>
        <end position="175"/>
    </location>
</feature>
<feature type="zinc finger region" description="C4-type" evidence="1">
    <location>
        <begin position="57"/>
        <end position="72"/>
    </location>
</feature>
<protein>
    <recommendedName>
        <fullName evidence="1">Recombination protein RecR</fullName>
    </recommendedName>
</protein>
<sequence length="203" mass="21827">MAFSPLVDQLLETLRVLPGVGPKTAQRMALHLLERDRDGGRRLVAALGEALEHVGYCQRCRTLAETPLCSICEDARRDEGLLCVVESPADMLAIEQAGGFRGLYFVLHGHLSPLDGIGPEDIGLDQLDERLAGGSVEEVILATNPTVEGEATAHYIAEQLRGTGVRLSRLAYGVPMGGELEYVDGGTLSRAFNGRLPFAQESS</sequence>
<comment type="function">
    <text evidence="1">May play a role in DNA repair. It seems to be involved in an RecBC-independent recombinational process of DNA repair. It may act with RecF and RecO.</text>
</comment>
<comment type="similarity">
    <text evidence="1">Belongs to the RecR family.</text>
</comment>
<keyword id="KW-0227">DNA damage</keyword>
<keyword id="KW-0233">DNA recombination</keyword>
<keyword id="KW-0234">DNA repair</keyword>
<keyword id="KW-0479">Metal-binding</keyword>
<keyword id="KW-1185">Reference proteome</keyword>
<keyword id="KW-0862">Zinc</keyword>
<keyword id="KW-0863">Zinc-finger</keyword>
<name>RECR_CHRSD</name>
<organism>
    <name type="scientific">Chromohalobacter salexigens (strain ATCC BAA-138 / DSM 3043 / CIP 106854 / NCIMB 13768 / 1H11)</name>
    <dbReference type="NCBI Taxonomy" id="290398"/>
    <lineage>
        <taxon>Bacteria</taxon>
        <taxon>Pseudomonadati</taxon>
        <taxon>Pseudomonadota</taxon>
        <taxon>Gammaproteobacteria</taxon>
        <taxon>Oceanospirillales</taxon>
        <taxon>Halomonadaceae</taxon>
        <taxon>Chromohalobacter</taxon>
    </lineage>
</organism>
<proteinExistence type="inferred from homology"/>
<reference key="1">
    <citation type="journal article" date="2011" name="Stand. Genomic Sci.">
        <title>Complete genome sequence of the halophilic and highly halotolerant Chromohalobacter salexigens type strain (1H11(T)).</title>
        <authorList>
            <person name="Copeland A."/>
            <person name="O'Connor K."/>
            <person name="Lucas S."/>
            <person name="Lapidus A."/>
            <person name="Berry K.W."/>
            <person name="Detter J.C."/>
            <person name="Del Rio T.G."/>
            <person name="Hammon N."/>
            <person name="Dalin E."/>
            <person name="Tice H."/>
            <person name="Pitluck S."/>
            <person name="Bruce D."/>
            <person name="Goodwin L."/>
            <person name="Han C."/>
            <person name="Tapia R."/>
            <person name="Saunders E."/>
            <person name="Schmutz J."/>
            <person name="Brettin T."/>
            <person name="Larimer F."/>
            <person name="Land M."/>
            <person name="Hauser L."/>
            <person name="Vargas C."/>
            <person name="Nieto J.J."/>
            <person name="Kyrpides N.C."/>
            <person name="Ivanova N."/>
            <person name="Goker M."/>
            <person name="Klenk H.P."/>
            <person name="Csonka L.N."/>
            <person name="Woyke T."/>
        </authorList>
    </citation>
    <scope>NUCLEOTIDE SEQUENCE [LARGE SCALE GENOMIC DNA]</scope>
    <source>
        <strain>ATCC BAA-138 / DSM 3043 / CIP 106854 / NCIMB 13768 / 1H11</strain>
    </source>
</reference>
<accession>Q1QXJ5</accession>
<gene>
    <name evidence="1" type="primary">recR</name>
    <name type="ordered locus">Csal_1460</name>
</gene>
<evidence type="ECO:0000255" key="1">
    <source>
        <dbReference type="HAMAP-Rule" id="MF_00017"/>
    </source>
</evidence>
<dbReference type="EMBL" id="CP000285">
    <property type="protein sequence ID" value="ABE58813.1"/>
    <property type="molecule type" value="Genomic_DNA"/>
</dbReference>
<dbReference type="RefSeq" id="WP_011506759.1">
    <property type="nucleotide sequence ID" value="NC_007963.1"/>
</dbReference>
<dbReference type="SMR" id="Q1QXJ5"/>
<dbReference type="STRING" id="290398.Csal_1460"/>
<dbReference type="GeneID" id="95334187"/>
<dbReference type="KEGG" id="csa:Csal_1460"/>
<dbReference type="eggNOG" id="COG0353">
    <property type="taxonomic scope" value="Bacteria"/>
</dbReference>
<dbReference type="HOGENOM" id="CLU_060739_1_2_6"/>
<dbReference type="OrthoDB" id="9802672at2"/>
<dbReference type="Proteomes" id="UP000000239">
    <property type="component" value="Chromosome"/>
</dbReference>
<dbReference type="GO" id="GO:0003677">
    <property type="term" value="F:DNA binding"/>
    <property type="evidence" value="ECO:0007669"/>
    <property type="project" value="UniProtKB-UniRule"/>
</dbReference>
<dbReference type="GO" id="GO:0008270">
    <property type="term" value="F:zinc ion binding"/>
    <property type="evidence" value="ECO:0007669"/>
    <property type="project" value="UniProtKB-KW"/>
</dbReference>
<dbReference type="GO" id="GO:0006310">
    <property type="term" value="P:DNA recombination"/>
    <property type="evidence" value="ECO:0007669"/>
    <property type="project" value="UniProtKB-UniRule"/>
</dbReference>
<dbReference type="GO" id="GO:0006281">
    <property type="term" value="P:DNA repair"/>
    <property type="evidence" value="ECO:0007669"/>
    <property type="project" value="UniProtKB-UniRule"/>
</dbReference>
<dbReference type="CDD" id="cd01025">
    <property type="entry name" value="TOPRIM_recR"/>
    <property type="match status" value="1"/>
</dbReference>
<dbReference type="FunFam" id="3.40.1360.10:FF:000001">
    <property type="entry name" value="Recombination protein RecR"/>
    <property type="match status" value="1"/>
</dbReference>
<dbReference type="Gene3D" id="3.40.1360.10">
    <property type="match status" value="1"/>
</dbReference>
<dbReference type="Gene3D" id="6.10.250.240">
    <property type="match status" value="1"/>
</dbReference>
<dbReference type="Gene3D" id="1.10.8.420">
    <property type="entry name" value="RecR Domain 1"/>
    <property type="match status" value="1"/>
</dbReference>
<dbReference type="HAMAP" id="MF_00017">
    <property type="entry name" value="RecR"/>
    <property type="match status" value="1"/>
</dbReference>
<dbReference type="InterPro" id="IPR000093">
    <property type="entry name" value="DNA_Rcmb_RecR"/>
</dbReference>
<dbReference type="InterPro" id="IPR023627">
    <property type="entry name" value="Rcmb_RecR"/>
</dbReference>
<dbReference type="InterPro" id="IPR015967">
    <property type="entry name" value="Rcmb_RecR_Znf"/>
</dbReference>
<dbReference type="InterPro" id="IPR006171">
    <property type="entry name" value="TOPRIM_dom"/>
</dbReference>
<dbReference type="InterPro" id="IPR034137">
    <property type="entry name" value="TOPRIM_RecR"/>
</dbReference>
<dbReference type="NCBIfam" id="TIGR00615">
    <property type="entry name" value="recR"/>
    <property type="match status" value="1"/>
</dbReference>
<dbReference type="PANTHER" id="PTHR30446">
    <property type="entry name" value="RECOMBINATION PROTEIN RECR"/>
    <property type="match status" value="1"/>
</dbReference>
<dbReference type="PANTHER" id="PTHR30446:SF0">
    <property type="entry name" value="RECOMBINATION PROTEIN RECR"/>
    <property type="match status" value="1"/>
</dbReference>
<dbReference type="Pfam" id="PF21175">
    <property type="entry name" value="RecR_C"/>
    <property type="match status" value="1"/>
</dbReference>
<dbReference type="Pfam" id="PF21176">
    <property type="entry name" value="RecR_HhH"/>
    <property type="match status" value="1"/>
</dbReference>
<dbReference type="Pfam" id="PF02132">
    <property type="entry name" value="RecR_ZnF"/>
    <property type="match status" value="1"/>
</dbReference>
<dbReference type="Pfam" id="PF13662">
    <property type="entry name" value="Toprim_4"/>
    <property type="match status" value="1"/>
</dbReference>
<dbReference type="SMART" id="SM00493">
    <property type="entry name" value="TOPRIM"/>
    <property type="match status" value="1"/>
</dbReference>
<dbReference type="SUPFAM" id="SSF111304">
    <property type="entry name" value="Recombination protein RecR"/>
    <property type="match status" value="1"/>
</dbReference>
<dbReference type="PROSITE" id="PS01300">
    <property type="entry name" value="RECR"/>
    <property type="match status" value="1"/>
</dbReference>
<dbReference type="PROSITE" id="PS50880">
    <property type="entry name" value="TOPRIM"/>
    <property type="match status" value="1"/>
</dbReference>